<feature type="chain" id="PRO_0000126164" description="Large ribosomal subunit protein bL36">
    <location>
        <begin position="1"/>
        <end position="38"/>
    </location>
</feature>
<sequence>MKVMASVKRICRNCKIIKRKGVVRVICSSDPRHKQRQG</sequence>
<organism>
    <name type="scientific">Burkholderia mallei (strain ATCC 23344)</name>
    <dbReference type="NCBI Taxonomy" id="243160"/>
    <lineage>
        <taxon>Bacteria</taxon>
        <taxon>Pseudomonadati</taxon>
        <taxon>Pseudomonadota</taxon>
        <taxon>Betaproteobacteria</taxon>
        <taxon>Burkholderiales</taxon>
        <taxon>Burkholderiaceae</taxon>
        <taxon>Burkholderia</taxon>
        <taxon>pseudomallei group</taxon>
    </lineage>
</organism>
<proteinExistence type="inferred from homology"/>
<accession>Q62GM7</accession>
<name>RL36_BURMA</name>
<reference key="1">
    <citation type="journal article" date="2004" name="Proc. Natl. Acad. Sci. U.S.A.">
        <title>Structural flexibility in the Burkholderia mallei genome.</title>
        <authorList>
            <person name="Nierman W.C."/>
            <person name="DeShazer D."/>
            <person name="Kim H.S."/>
            <person name="Tettelin H."/>
            <person name="Nelson K.E."/>
            <person name="Feldblyum T.V."/>
            <person name="Ulrich R.L."/>
            <person name="Ronning C.M."/>
            <person name="Brinkac L.M."/>
            <person name="Daugherty S.C."/>
            <person name="Davidsen T.D."/>
            <person name="DeBoy R.T."/>
            <person name="Dimitrov G."/>
            <person name="Dodson R.J."/>
            <person name="Durkin A.S."/>
            <person name="Gwinn M.L."/>
            <person name="Haft D.H."/>
            <person name="Khouri H.M."/>
            <person name="Kolonay J.F."/>
            <person name="Madupu R."/>
            <person name="Mohammoud Y."/>
            <person name="Nelson W.C."/>
            <person name="Radune D."/>
            <person name="Romero C.M."/>
            <person name="Sarria S."/>
            <person name="Selengut J."/>
            <person name="Shamblin C."/>
            <person name="Sullivan S.A."/>
            <person name="White O."/>
            <person name="Yu Y."/>
            <person name="Zafar N."/>
            <person name="Zhou L."/>
            <person name="Fraser C.M."/>
        </authorList>
    </citation>
    <scope>NUCLEOTIDE SEQUENCE [LARGE SCALE GENOMIC DNA]</scope>
    <source>
        <strain>ATCC 23344</strain>
    </source>
</reference>
<protein>
    <recommendedName>
        <fullName evidence="1">Large ribosomal subunit protein bL36</fullName>
    </recommendedName>
    <alternativeName>
        <fullName evidence="2">50S ribosomal protein L36</fullName>
    </alternativeName>
</protein>
<dbReference type="EMBL" id="CP000010">
    <property type="protein sequence ID" value="AAU47848.1"/>
    <property type="molecule type" value="Genomic_DNA"/>
</dbReference>
<dbReference type="RefSeq" id="WP_004199844.1">
    <property type="nucleotide sequence ID" value="NC_006348.1"/>
</dbReference>
<dbReference type="RefSeq" id="YP_104144.1">
    <property type="nucleotide sequence ID" value="NC_006348.1"/>
</dbReference>
<dbReference type="SMR" id="Q62GM7"/>
<dbReference type="GeneID" id="98107138"/>
<dbReference type="KEGG" id="bma:BMA2610"/>
<dbReference type="PATRIC" id="fig|243160.12.peg.2681"/>
<dbReference type="eggNOG" id="COG0257">
    <property type="taxonomic scope" value="Bacteria"/>
</dbReference>
<dbReference type="HOGENOM" id="CLU_135723_6_2_4"/>
<dbReference type="PRO" id="PR:Q62GM7"/>
<dbReference type="Proteomes" id="UP000006693">
    <property type="component" value="Chromosome 1"/>
</dbReference>
<dbReference type="GO" id="GO:0005737">
    <property type="term" value="C:cytoplasm"/>
    <property type="evidence" value="ECO:0007669"/>
    <property type="project" value="UniProtKB-ARBA"/>
</dbReference>
<dbReference type="GO" id="GO:1990904">
    <property type="term" value="C:ribonucleoprotein complex"/>
    <property type="evidence" value="ECO:0007669"/>
    <property type="project" value="UniProtKB-KW"/>
</dbReference>
<dbReference type="GO" id="GO:0005840">
    <property type="term" value="C:ribosome"/>
    <property type="evidence" value="ECO:0007669"/>
    <property type="project" value="UniProtKB-KW"/>
</dbReference>
<dbReference type="GO" id="GO:0003735">
    <property type="term" value="F:structural constituent of ribosome"/>
    <property type="evidence" value="ECO:0007669"/>
    <property type="project" value="InterPro"/>
</dbReference>
<dbReference type="GO" id="GO:0006412">
    <property type="term" value="P:translation"/>
    <property type="evidence" value="ECO:0007669"/>
    <property type="project" value="UniProtKB-UniRule"/>
</dbReference>
<dbReference type="HAMAP" id="MF_00251">
    <property type="entry name" value="Ribosomal_bL36"/>
    <property type="match status" value="1"/>
</dbReference>
<dbReference type="InterPro" id="IPR000473">
    <property type="entry name" value="Ribosomal_bL36"/>
</dbReference>
<dbReference type="InterPro" id="IPR035977">
    <property type="entry name" value="Ribosomal_bL36_sp"/>
</dbReference>
<dbReference type="NCBIfam" id="TIGR01022">
    <property type="entry name" value="rpmJ_bact"/>
    <property type="match status" value="1"/>
</dbReference>
<dbReference type="PANTHER" id="PTHR42888">
    <property type="entry name" value="50S RIBOSOMAL PROTEIN L36, CHLOROPLASTIC"/>
    <property type="match status" value="1"/>
</dbReference>
<dbReference type="PANTHER" id="PTHR42888:SF1">
    <property type="entry name" value="LARGE RIBOSOMAL SUBUNIT PROTEIN BL36C"/>
    <property type="match status" value="1"/>
</dbReference>
<dbReference type="Pfam" id="PF00444">
    <property type="entry name" value="Ribosomal_L36"/>
    <property type="match status" value="1"/>
</dbReference>
<dbReference type="SUPFAM" id="SSF57840">
    <property type="entry name" value="Ribosomal protein L36"/>
    <property type="match status" value="1"/>
</dbReference>
<dbReference type="PROSITE" id="PS00828">
    <property type="entry name" value="RIBOSOMAL_L36"/>
    <property type="match status" value="1"/>
</dbReference>
<gene>
    <name evidence="1" type="primary">rpmJ</name>
    <name type="ordered locus">BMA2610</name>
</gene>
<evidence type="ECO:0000255" key="1">
    <source>
        <dbReference type="HAMAP-Rule" id="MF_00251"/>
    </source>
</evidence>
<evidence type="ECO:0000305" key="2"/>
<keyword id="KW-1185">Reference proteome</keyword>
<keyword id="KW-0687">Ribonucleoprotein</keyword>
<keyword id="KW-0689">Ribosomal protein</keyword>
<comment type="similarity">
    <text evidence="1">Belongs to the bacterial ribosomal protein bL36 family.</text>
</comment>